<keyword id="KW-0007">Acetylation</keyword>
<keyword id="KW-0009">Actin-binding</keyword>
<keyword id="KW-0025">Alternative splicing</keyword>
<keyword id="KW-0112">Calmodulin-binding</keyword>
<keyword id="KW-1003">Cell membrane</keyword>
<keyword id="KW-0963">Cytoplasm</keyword>
<keyword id="KW-0206">Cytoskeleton</keyword>
<keyword id="KW-0472">Membrane</keyword>
<keyword id="KW-0597">Phosphoprotein</keyword>
<keyword id="KW-1185">Reference proteome</keyword>
<reference key="1">
    <citation type="journal article" date="2000" name="Mamm. Genome">
        <title>The mouse adducin gene family: alternative splicing and chromosomal localization.</title>
        <authorList>
            <person name="Suriyapperuma S.P."/>
            <person name="Lozovatsky L."/>
            <person name="Ciciotte S.L."/>
            <person name="Peters L.L."/>
            <person name="Gilligan D.M."/>
        </authorList>
    </citation>
    <scope>NUCLEOTIDE SEQUENCE [MRNA]</scope>
    <scope>ALTERNATIVE SPLICING</scope>
</reference>
<reference key="2">
    <citation type="journal article" date="2000" name="Blood">
        <title>Mild spherocytic hereditary elliptocytosis and altered levels of alpha- and gamma-adducins in beta-adducin-deficient mice.</title>
        <authorList>
            <person name="Muro A.F."/>
            <person name="Marro M.L."/>
            <person name="Gajovic S."/>
            <person name="Porro F."/>
            <person name="Luzzatto L."/>
            <person name="Baralle F.E."/>
        </authorList>
    </citation>
    <scope>NUCLEOTIDE SEQUENCE [MRNA]</scope>
    <source>
        <strain>C57BL/6J</strain>
    </source>
</reference>
<reference key="3">
    <citation type="journal article" date="2004" name="Mol. Cell. Proteomics">
        <title>Phosphoproteomic analysis of the developing mouse brain.</title>
        <authorList>
            <person name="Ballif B.A."/>
            <person name="Villen J."/>
            <person name="Beausoleil S.A."/>
            <person name="Schwartz D."/>
            <person name="Gygi S.P."/>
        </authorList>
    </citation>
    <scope>PHOSPHORYLATION [LARGE SCALE ANALYSIS] AT THR-610</scope>
    <scope>IDENTIFICATION BY MASS SPECTROMETRY [LARGE SCALE ANALYSIS]</scope>
    <source>
        <tissue>Embryonic brain</tissue>
    </source>
</reference>
<reference key="4">
    <citation type="journal article" date="2006" name="Mol. Cell. Proteomics">
        <title>Comprehensive identification of phosphorylation sites in postsynaptic density preparations.</title>
        <authorList>
            <person name="Trinidad J.C."/>
            <person name="Specht C.G."/>
            <person name="Thalhammer A."/>
            <person name="Schoepfer R."/>
            <person name="Burlingame A.L."/>
        </authorList>
    </citation>
    <scope>PHOSPHORYLATION [LARGE SCALE ANALYSIS] AT SER-586</scope>
    <scope>IDENTIFICATION BY MASS SPECTROMETRY [LARGE SCALE ANALYSIS]</scope>
    <source>
        <tissue>Brain</tissue>
    </source>
</reference>
<reference key="5">
    <citation type="journal article" date="2007" name="Proc. Natl. Acad. Sci. U.S.A.">
        <title>Large-scale phosphorylation analysis of mouse liver.</title>
        <authorList>
            <person name="Villen J."/>
            <person name="Beausoleil S.A."/>
            <person name="Gerber S.A."/>
            <person name="Gygi S.P."/>
        </authorList>
    </citation>
    <scope>IDENTIFICATION BY MASS SPECTROMETRY [LARGE SCALE ANALYSIS]</scope>
    <source>
        <tissue>Liver</tissue>
    </source>
</reference>
<reference key="6">
    <citation type="journal article" date="2010" name="Cell">
        <title>A tissue-specific atlas of mouse protein phosphorylation and expression.</title>
        <authorList>
            <person name="Huttlin E.L."/>
            <person name="Jedrychowski M.P."/>
            <person name="Elias J.E."/>
            <person name="Goswami T."/>
            <person name="Rad R."/>
            <person name="Beausoleil S.A."/>
            <person name="Villen J."/>
            <person name="Haas W."/>
            <person name="Sowa M.E."/>
            <person name="Gygi S.P."/>
        </authorList>
    </citation>
    <scope>PHOSPHORYLATION [LARGE SCALE ANALYSIS] AT SER-59; SER-355; THR-358; SER-364; SER-366; SER-408; SER-427; THR-429; SER-431; SER-436; SER-464; SER-465; SER-586; SER-600; SER-605; THR-610; SER-613 AND THR-614</scope>
    <scope>PHOSPHORYLATION [LARGE SCALE ANALYSIS] AT SER-600; SER-605; THR-610; SER-613 AND THR-614 (ISOFORM 2)</scope>
    <scope>IDENTIFICATION BY MASS SPECTROMETRY [LARGE SCALE ANALYSIS]</scope>
    <source>
        <tissue>Brain</tissue>
        <tissue>Brown adipose tissue</tissue>
        <tissue>Heart</tissue>
        <tissue>Kidney</tissue>
        <tissue>Liver</tissue>
        <tissue>Lung</tissue>
        <tissue>Pancreas</tissue>
        <tissue>Spleen</tissue>
        <tissue>Testis</tissue>
    </source>
</reference>
<proteinExistence type="evidence at protein level"/>
<dbReference type="EMBL" id="AF096839">
    <property type="protein sequence ID" value="AAF24971.1"/>
    <property type="molecule type" value="mRNA"/>
</dbReference>
<dbReference type="EMBL" id="AF189771">
    <property type="protein sequence ID" value="AAF29504.1"/>
    <property type="molecule type" value="mRNA"/>
</dbReference>
<dbReference type="CCDS" id="CCDS19216.1">
    <molecule id="Q9QYC0-1"/>
</dbReference>
<dbReference type="CCDS" id="CCDS39069.1">
    <molecule id="Q9QYC0-2"/>
</dbReference>
<dbReference type="RefSeq" id="NP_001019629.2">
    <molecule id="Q9QYC0-1"/>
    <property type="nucleotide sequence ID" value="NM_001024458.4"/>
</dbReference>
<dbReference type="RefSeq" id="NP_001095914.1">
    <property type="nucleotide sequence ID" value="NM_001102444.2"/>
</dbReference>
<dbReference type="RefSeq" id="NP_001318009.1">
    <molecule id="Q9QYC0-1"/>
    <property type="nucleotide sequence ID" value="NM_001331080.1"/>
</dbReference>
<dbReference type="RefSeq" id="NP_001318016.1">
    <molecule id="Q9QYC0-2"/>
    <property type="nucleotide sequence ID" value="NM_001331087.1"/>
</dbReference>
<dbReference type="RefSeq" id="NP_001407890.1">
    <molecule id="Q9QYC0-2"/>
    <property type="nucleotide sequence ID" value="NM_001420961.1"/>
</dbReference>
<dbReference type="RefSeq" id="NP_038485.1">
    <molecule id="Q9QYC0-2"/>
    <property type="nucleotide sequence ID" value="NM_013457.4"/>
</dbReference>
<dbReference type="RefSeq" id="XP_017176104.1">
    <property type="nucleotide sequence ID" value="XM_017320615.1"/>
</dbReference>
<dbReference type="SMR" id="Q9QYC0"/>
<dbReference type="BioGRID" id="197981">
    <property type="interactions" value="16"/>
</dbReference>
<dbReference type="FunCoup" id="Q9QYC0">
    <property type="interactions" value="3275"/>
</dbReference>
<dbReference type="IntAct" id="Q9QYC0">
    <property type="interactions" value="7"/>
</dbReference>
<dbReference type="MINT" id="Q9QYC0"/>
<dbReference type="STRING" id="10090.ENSMUSP00000109979"/>
<dbReference type="GlyGen" id="Q9QYC0">
    <property type="glycosylation" value="12 sites, 1 O-linked glycan (10 sites)"/>
</dbReference>
<dbReference type="iPTMnet" id="Q9QYC0"/>
<dbReference type="PhosphoSitePlus" id="Q9QYC0"/>
<dbReference type="SwissPalm" id="Q9QYC0"/>
<dbReference type="jPOST" id="Q9QYC0"/>
<dbReference type="PaxDb" id="10090-ENSMUSP00000109979"/>
<dbReference type="PeptideAtlas" id="Q9QYC0"/>
<dbReference type="ProteomicsDB" id="282027">
    <molecule id="Q9QYC0-1"/>
</dbReference>
<dbReference type="ProteomicsDB" id="282028">
    <molecule id="Q9QYC0-2"/>
</dbReference>
<dbReference type="Pumba" id="Q9QYC0"/>
<dbReference type="Antibodypedia" id="4065">
    <property type="antibodies" value="747 antibodies from 41 providers"/>
</dbReference>
<dbReference type="DNASU" id="11518"/>
<dbReference type="Ensembl" id="ENSMUST00000114338.9">
    <molecule id="Q9QYC0-2"/>
    <property type="protein sequence ID" value="ENSMUSP00000109977.3"/>
    <property type="gene ID" value="ENSMUSG00000029106.15"/>
</dbReference>
<dbReference type="Ensembl" id="ENSMUST00000114340.9">
    <molecule id="Q9QYC0-1"/>
    <property type="protein sequence ID" value="ENSMUSP00000109979.3"/>
    <property type="gene ID" value="ENSMUSG00000029106.15"/>
</dbReference>
<dbReference type="GeneID" id="11518"/>
<dbReference type="KEGG" id="mmu:11518"/>
<dbReference type="UCSC" id="uc008xcp.1">
    <molecule id="Q9QYC0-2"/>
    <property type="organism name" value="mouse"/>
</dbReference>
<dbReference type="UCSC" id="uc008xcr.1">
    <molecule id="Q9QYC0-1"/>
    <property type="organism name" value="mouse"/>
</dbReference>
<dbReference type="AGR" id="MGI:87918"/>
<dbReference type="CTD" id="118"/>
<dbReference type="MGI" id="MGI:87918">
    <property type="gene designation" value="Add1"/>
</dbReference>
<dbReference type="VEuPathDB" id="HostDB:ENSMUSG00000029106"/>
<dbReference type="eggNOG" id="KOG3699">
    <property type="taxonomic scope" value="Eukaryota"/>
</dbReference>
<dbReference type="GeneTree" id="ENSGT00940000158581"/>
<dbReference type="InParanoid" id="Q9QYC0"/>
<dbReference type="OMA" id="LEWESWM"/>
<dbReference type="OrthoDB" id="3238794at2759"/>
<dbReference type="PhylomeDB" id="Q9QYC0"/>
<dbReference type="TreeFam" id="TF313003"/>
<dbReference type="Reactome" id="R-MMU-264870">
    <property type="pathway name" value="Caspase-mediated cleavage of cytoskeletal proteins"/>
</dbReference>
<dbReference type="Reactome" id="R-MMU-5223345">
    <property type="pathway name" value="Miscellaneous transport and binding events"/>
</dbReference>
<dbReference type="BioGRID-ORCS" id="11518">
    <property type="hits" value="3 hits in 79 CRISPR screens"/>
</dbReference>
<dbReference type="CD-CODE" id="CE726F99">
    <property type="entry name" value="Postsynaptic density"/>
</dbReference>
<dbReference type="ChiTaRS" id="Add1">
    <property type="organism name" value="mouse"/>
</dbReference>
<dbReference type="PRO" id="PR:Q9QYC0"/>
<dbReference type="Proteomes" id="UP000000589">
    <property type="component" value="Chromosome 5"/>
</dbReference>
<dbReference type="RNAct" id="Q9QYC0">
    <property type="molecule type" value="protein"/>
</dbReference>
<dbReference type="Bgee" id="ENSMUSG00000029106">
    <property type="expression patterns" value="Expressed in retinal neural layer and 266 other cell types or tissues"/>
</dbReference>
<dbReference type="ExpressionAtlas" id="Q9QYC0">
    <property type="expression patterns" value="baseline and differential"/>
</dbReference>
<dbReference type="GO" id="GO:0005912">
    <property type="term" value="C:adherens junction"/>
    <property type="evidence" value="ECO:0000315"/>
    <property type="project" value="CAFA"/>
</dbReference>
<dbReference type="GO" id="GO:0005737">
    <property type="term" value="C:cytoplasm"/>
    <property type="evidence" value="ECO:0007669"/>
    <property type="project" value="UniProtKB-KW"/>
</dbReference>
<dbReference type="GO" id="GO:0005856">
    <property type="term" value="C:cytoskeleton"/>
    <property type="evidence" value="ECO:0000314"/>
    <property type="project" value="MGI"/>
</dbReference>
<dbReference type="GO" id="GO:0016020">
    <property type="term" value="C:membrane"/>
    <property type="evidence" value="ECO:0000314"/>
    <property type="project" value="MGI"/>
</dbReference>
<dbReference type="GO" id="GO:0016604">
    <property type="term" value="C:nuclear body"/>
    <property type="evidence" value="ECO:0007669"/>
    <property type="project" value="Ensembl"/>
</dbReference>
<dbReference type="GO" id="GO:0005886">
    <property type="term" value="C:plasma membrane"/>
    <property type="evidence" value="ECO:0007669"/>
    <property type="project" value="UniProtKB-SubCell"/>
</dbReference>
<dbReference type="GO" id="GO:0045202">
    <property type="term" value="C:synapse"/>
    <property type="evidence" value="ECO:0000314"/>
    <property type="project" value="SynGO"/>
</dbReference>
<dbReference type="GO" id="GO:0003779">
    <property type="term" value="F:actin binding"/>
    <property type="evidence" value="ECO:0007669"/>
    <property type="project" value="UniProtKB-KW"/>
</dbReference>
<dbReference type="GO" id="GO:0005516">
    <property type="term" value="F:calmodulin binding"/>
    <property type="evidence" value="ECO:0007669"/>
    <property type="project" value="UniProtKB-KW"/>
</dbReference>
<dbReference type="GO" id="GO:0005200">
    <property type="term" value="F:structural constituent of cytoskeleton"/>
    <property type="evidence" value="ECO:0000314"/>
    <property type="project" value="MGI"/>
</dbReference>
<dbReference type="GO" id="GO:0000902">
    <property type="term" value="P:cell morphogenesis"/>
    <property type="evidence" value="ECO:0000315"/>
    <property type="project" value="MGI"/>
</dbReference>
<dbReference type="GO" id="GO:0006884">
    <property type="term" value="P:cell volume homeostasis"/>
    <property type="evidence" value="ECO:0000315"/>
    <property type="project" value="MGI"/>
</dbReference>
<dbReference type="GO" id="GO:0071277">
    <property type="term" value="P:cellular response to calcium ion"/>
    <property type="evidence" value="ECO:0000314"/>
    <property type="project" value="CAFA"/>
</dbReference>
<dbReference type="GO" id="GO:0030218">
    <property type="term" value="P:erythrocyte differentiation"/>
    <property type="evidence" value="ECO:0000315"/>
    <property type="project" value="MGI"/>
</dbReference>
<dbReference type="GO" id="GO:0020027">
    <property type="term" value="P:hemoglobin metabolic process"/>
    <property type="evidence" value="ECO:0000315"/>
    <property type="project" value="MGI"/>
</dbReference>
<dbReference type="GO" id="GO:0048873">
    <property type="term" value="P:homeostasis of number of cells within a tissue"/>
    <property type="evidence" value="ECO:0000315"/>
    <property type="project" value="MGI"/>
</dbReference>
<dbReference type="GO" id="GO:0001701">
    <property type="term" value="P:in utero embryonic development"/>
    <property type="evidence" value="ECO:0000315"/>
    <property type="project" value="MGI"/>
</dbReference>
<dbReference type="GO" id="GO:0035264">
    <property type="term" value="P:multicellular organism growth"/>
    <property type="evidence" value="ECO:0000315"/>
    <property type="project" value="MGI"/>
</dbReference>
<dbReference type="GO" id="GO:1903393">
    <property type="term" value="P:positive regulation of adherens junction organization"/>
    <property type="evidence" value="ECO:0000315"/>
    <property type="project" value="CAFA"/>
</dbReference>
<dbReference type="GO" id="GO:1903142">
    <property type="term" value="P:positive regulation of establishment of endothelial barrier"/>
    <property type="evidence" value="ECO:0000315"/>
    <property type="project" value="CAFA"/>
</dbReference>
<dbReference type="CDD" id="cd00398">
    <property type="entry name" value="Aldolase_II"/>
    <property type="match status" value="1"/>
</dbReference>
<dbReference type="FunFam" id="3.40.225.10:FF:000002">
    <property type="entry name" value="alpha-adducin isoform X2"/>
    <property type="match status" value="1"/>
</dbReference>
<dbReference type="Gene3D" id="3.40.225.10">
    <property type="entry name" value="Class II aldolase/adducin N-terminal domain"/>
    <property type="match status" value="1"/>
</dbReference>
<dbReference type="InterPro" id="IPR051017">
    <property type="entry name" value="Aldolase-II_Adducin_sf"/>
</dbReference>
<dbReference type="InterPro" id="IPR001303">
    <property type="entry name" value="Aldolase_II/adducin_N"/>
</dbReference>
<dbReference type="InterPro" id="IPR036409">
    <property type="entry name" value="Aldolase_II/adducin_N_sf"/>
</dbReference>
<dbReference type="NCBIfam" id="NF005451">
    <property type="entry name" value="PRK07044.1"/>
    <property type="match status" value="1"/>
</dbReference>
<dbReference type="PANTHER" id="PTHR10672">
    <property type="entry name" value="ADDUCIN"/>
    <property type="match status" value="1"/>
</dbReference>
<dbReference type="PANTHER" id="PTHR10672:SF4">
    <property type="entry name" value="ALPHA-ADDUCIN"/>
    <property type="match status" value="1"/>
</dbReference>
<dbReference type="Pfam" id="PF00596">
    <property type="entry name" value="Aldolase_II"/>
    <property type="match status" value="1"/>
</dbReference>
<dbReference type="SMART" id="SM01007">
    <property type="entry name" value="Aldolase_II"/>
    <property type="match status" value="1"/>
</dbReference>
<dbReference type="SUPFAM" id="SSF53639">
    <property type="entry name" value="AraD/HMP-PK domain-like"/>
    <property type="match status" value="1"/>
</dbReference>
<evidence type="ECO:0000250" key="1">
    <source>
        <dbReference type="UniProtKB" id="P35611"/>
    </source>
</evidence>
<evidence type="ECO:0000255" key="2"/>
<evidence type="ECO:0000256" key="3">
    <source>
        <dbReference type="SAM" id="MobiDB-lite"/>
    </source>
</evidence>
<evidence type="ECO:0000305" key="4"/>
<evidence type="ECO:0007744" key="5">
    <source>
    </source>
</evidence>
<evidence type="ECO:0007744" key="6">
    <source>
    </source>
</evidence>
<evidence type="ECO:0007744" key="7">
    <source>
    </source>
</evidence>
<accession>Q9QYC0</accession>
<accession>Q9JLE3</accession>
<organism>
    <name type="scientific">Mus musculus</name>
    <name type="common">Mouse</name>
    <dbReference type="NCBI Taxonomy" id="10090"/>
    <lineage>
        <taxon>Eukaryota</taxon>
        <taxon>Metazoa</taxon>
        <taxon>Chordata</taxon>
        <taxon>Craniata</taxon>
        <taxon>Vertebrata</taxon>
        <taxon>Euteleostomi</taxon>
        <taxon>Mammalia</taxon>
        <taxon>Eutheria</taxon>
        <taxon>Euarchontoglires</taxon>
        <taxon>Glires</taxon>
        <taxon>Rodentia</taxon>
        <taxon>Myomorpha</taxon>
        <taxon>Muroidea</taxon>
        <taxon>Muridae</taxon>
        <taxon>Murinae</taxon>
        <taxon>Mus</taxon>
        <taxon>Mus</taxon>
    </lineage>
</organism>
<comment type="function">
    <text>Membrane-cytoskeleton-associated protein that promotes the assembly of the spectrin-actin network. Binds to calmodulin.</text>
</comment>
<comment type="subunit">
    <text>Heterodimer of an alpha and a beta subunit or an alpha and a gamma subunit.</text>
</comment>
<comment type="subcellular location">
    <subcellularLocation>
        <location>Cytoplasm</location>
        <location>Cytoskeleton</location>
    </subcellularLocation>
    <subcellularLocation>
        <location>Cell membrane</location>
        <topology>Peripheral membrane protein</topology>
        <orientation>Cytoplasmic side</orientation>
    </subcellularLocation>
</comment>
<comment type="alternative products">
    <event type="alternative splicing"/>
    <isoform>
        <id>Q9QYC0-1</id>
        <name>1</name>
        <sequence type="displayed"/>
    </isoform>
    <isoform>
        <id>Q9QYC0-2</id>
        <name>2</name>
        <sequence type="described" ref="VSP_000177 VSP_000178"/>
    </isoform>
    <text>Additional isoforms seem to exist.</text>
</comment>
<comment type="domain">
    <text>Each subunit is comprised of three regions: a NH2-terminal protease-resistant globular head region, a short connecting subdomain, and a protease-sensitive tail region.</text>
</comment>
<comment type="similarity">
    <text evidence="4">Belongs to the aldolase class II family. Adducin subfamily.</text>
</comment>
<protein>
    <recommendedName>
        <fullName>Alpha-adducin</fullName>
    </recommendedName>
    <alternativeName>
        <fullName>Erythrocyte adducin subunit alpha</fullName>
    </alternativeName>
</protein>
<sequence>MNGDTRAAVVTSPPPTTAPHKERYFDRVDENNPEYLRERNMAPDLRQDFNMMEQKKRVSMILQSPAFCEELESMIQEQFKKGKNPTGLLALQQIADFMTASVPNVYPAAPQGGMAALNMSLGMVTPVNDLRGSDSIAYDKGEKLLRCKLAAFYRLADLFGWSQLIYNHITTRVNSEQEHFLIVPFGLLYSEVTASSLVKVNLQGDIVDRGSTNLGVNQAGFTLHSAVYAARPDAKCIVHIHTPAGAAVSAMKCGLLPISPEALSLGDVAYHDYHGILVDEEEKILIQKNLGPKSKVLILRNHGLVSVGESVEEAFYYIHNLVVACEIQVRTLASAGGPDNLVLLDPGKYKAKSRSPGTPAGEGSGSPPKWQIGEQEFEALMRMLDNLGYRTGYPYRYPALRERSKKYSDVEVPASVTGHSFASDGDSGTCSPLRHSFQKQQREKTRWLHSGRGDDASEEGQNGSSPKSKTKWTKEDGHRTSTSAVPNLFVPLNTNPKEVQEMRNKIREQNLQDIKTAGPQSQVLCGVMMDRSLVQGELVTASKAIIEKEYQPHVIVSTTGPNPFNTLTDRELEEYRREVERKQKGSEENLDETREQKEKSPPDQSAVPNTPPSTPVKLEEDLPQEPTSRDDSDATTFKPTPPDLSPDEPSEALAFPAVEEEAHASPDPTQPPAEADPEPASAPTPGAEEVASPATEEGSPMDPGSDGSPGKSPSKKKKKFRTPSFLKKSKKKSDS</sequence>
<feature type="chain" id="PRO_0000218531" description="Alpha-adducin">
    <location>
        <begin position="1"/>
        <end position="735"/>
    </location>
</feature>
<feature type="region of interest" description="Disordered" evidence="3">
    <location>
        <begin position="1"/>
        <end position="21"/>
    </location>
</feature>
<feature type="region of interest" description="Disordered" evidence="3">
    <location>
        <begin position="418"/>
        <end position="487"/>
    </location>
</feature>
<feature type="region of interest" description="Disordered" evidence="3">
    <location>
        <begin position="576"/>
        <end position="735"/>
    </location>
</feature>
<feature type="region of interest" description="Interaction with calmodulin" evidence="2">
    <location>
        <begin position="715"/>
        <end position="732"/>
    </location>
</feature>
<feature type="compositionally biased region" description="Low complexity" evidence="3">
    <location>
        <begin position="1"/>
        <end position="11"/>
    </location>
</feature>
<feature type="compositionally biased region" description="Basic and acidic residues" evidence="3">
    <location>
        <begin position="440"/>
        <end position="455"/>
    </location>
</feature>
<feature type="compositionally biased region" description="Basic and acidic residues" evidence="3">
    <location>
        <begin position="576"/>
        <end position="601"/>
    </location>
</feature>
<feature type="compositionally biased region" description="Low complexity" evidence="3">
    <location>
        <begin position="698"/>
        <end position="712"/>
    </location>
</feature>
<feature type="compositionally biased region" description="Basic residues" evidence="3">
    <location>
        <begin position="713"/>
        <end position="735"/>
    </location>
</feature>
<feature type="modified residue" description="N-acetylmethionine" evidence="1">
    <location>
        <position position="1"/>
    </location>
</feature>
<feature type="modified residue" description="Phosphoserine" evidence="1">
    <location>
        <position position="12"/>
    </location>
</feature>
<feature type="modified residue" description="Phosphoserine" evidence="7">
    <location>
        <position position="59"/>
    </location>
</feature>
<feature type="modified residue" description="Phosphoserine" evidence="1">
    <location>
        <position position="64"/>
    </location>
</feature>
<feature type="modified residue" description="Phosphothreonine" evidence="1">
    <location>
        <position position="331"/>
    </location>
</feature>
<feature type="modified residue" description="Phosphoserine" evidence="1">
    <location>
        <position position="334"/>
    </location>
</feature>
<feature type="modified residue" description="Phosphoserine" evidence="1">
    <location>
        <position position="353"/>
    </location>
</feature>
<feature type="modified residue" description="Phosphoserine" evidence="7">
    <location>
        <position position="355"/>
    </location>
</feature>
<feature type="modified residue" description="Phosphothreonine" evidence="7">
    <location>
        <position position="358"/>
    </location>
</feature>
<feature type="modified residue" description="Phosphoserine" evidence="7">
    <location>
        <position position="364"/>
    </location>
</feature>
<feature type="modified residue" description="Phosphoserine" evidence="7">
    <location>
        <position position="366"/>
    </location>
</feature>
<feature type="modified residue" description="Phosphoserine" evidence="7">
    <location>
        <position position="408"/>
    </location>
</feature>
<feature type="modified residue" description="Phosphoserine" evidence="7">
    <location>
        <position position="427"/>
    </location>
</feature>
<feature type="modified residue" description="Phosphothreonine" evidence="7">
    <location>
        <position position="429"/>
    </location>
</feature>
<feature type="modified residue" description="Phosphoserine" evidence="7">
    <location>
        <position position="431"/>
    </location>
</feature>
<feature type="modified residue" description="Phosphoserine" evidence="7">
    <location>
        <position position="436"/>
    </location>
</feature>
<feature type="modified residue" description="Phosphothreonine; by ROCK2" evidence="1">
    <location>
        <position position="445"/>
    </location>
</feature>
<feature type="modified residue" description="Phosphoserine" evidence="7">
    <location>
        <position position="464"/>
    </location>
</feature>
<feature type="modified residue" description="Phosphoserine" evidence="7">
    <location>
        <position position="465"/>
    </location>
</feature>
<feature type="modified residue" description="Phosphothreonine; by ROCK2" evidence="1">
    <location>
        <position position="480"/>
    </location>
</feature>
<feature type="modified residue" description="Phosphoserine; by PKA" evidence="1">
    <location>
        <position position="481"/>
    </location>
</feature>
<feature type="modified residue" description="Phosphoserine" evidence="6 7">
    <location>
        <position position="586"/>
    </location>
</feature>
<feature type="modified residue" description="Phosphoserine" evidence="7">
    <location>
        <position position="600"/>
    </location>
</feature>
<feature type="modified residue" description="Phosphoserine" evidence="7">
    <location>
        <position position="605"/>
    </location>
</feature>
<feature type="modified residue" description="Phosphothreonine" evidence="5 7">
    <location>
        <position position="610"/>
    </location>
</feature>
<feature type="modified residue" description="Phosphoserine" evidence="7">
    <location>
        <position position="613"/>
    </location>
</feature>
<feature type="modified residue" description="Phosphothreonine" evidence="7">
    <location>
        <position position="614"/>
    </location>
</feature>
<feature type="modified residue" description="Phosphoserine" evidence="1">
    <location>
        <position position="705"/>
    </location>
</feature>
<feature type="modified residue" description="Phosphoserine" evidence="1">
    <location>
        <position position="708"/>
    </location>
</feature>
<feature type="modified residue" description="Phosphoserine" evidence="1">
    <location>
        <position position="712"/>
    </location>
</feature>
<feature type="modified residue" description="Phosphoserine; by PKC" evidence="1">
    <location>
        <position position="714"/>
    </location>
</feature>
<feature type="modified residue" description="Phosphoserine; by PKA and PKC" evidence="1">
    <location>
        <position position="724"/>
    </location>
</feature>
<feature type="splice variant" id="VSP_000177" description="In isoform 2." evidence="4">
    <original>DLPQEPTSRDDS</original>
    <variation>AGDGCAKEYLLP</variation>
    <location>
        <begin position="621"/>
        <end position="632"/>
    </location>
</feature>
<feature type="splice variant" id="VSP_000178" description="In isoform 2." evidence="4">
    <location>
        <begin position="633"/>
        <end position="735"/>
    </location>
</feature>
<feature type="sequence conflict" description="In Ref. 2; AAF29504." evidence="4" ref="2">
    <original>A</original>
    <variation>T</variation>
    <location>
        <position position="234"/>
    </location>
</feature>
<feature type="modified residue" description="Phosphoserine" evidence="7">
    <location sequence="Q9QYC0-2">
        <position position="600"/>
    </location>
</feature>
<feature type="modified residue" description="Phosphoserine" evidence="7">
    <location sequence="Q9QYC0-2">
        <position position="605"/>
    </location>
</feature>
<feature type="modified residue" description="Phosphothreonine" evidence="7">
    <location sequence="Q9QYC0-2">
        <position position="610"/>
    </location>
</feature>
<feature type="modified residue" description="Phosphoserine" evidence="7">
    <location sequence="Q9QYC0-2">
        <position position="613"/>
    </location>
</feature>
<feature type="modified residue" description="Phosphothreonine" evidence="7">
    <location sequence="Q9QYC0-2">
        <position position="614"/>
    </location>
</feature>
<name>ADDA_MOUSE</name>
<gene>
    <name type="primary">Add1</name>
</gene>